<accession>Q3KPR5</accession>
<sequence>MPNIEADRVTSVPENNDCKSKSQPLRNNLHETVKSYSIQGAATANIEPPAERPYPWGCPVTHTKEKFYTICADYAFLNQATSLCKSSSSVCSSSSEDKSALSNTINYIDLQTSESDSVYNEDASLESLSSNLGTRPLAWEIDKSDFSTMTSKLKRSGVKKQTPKKKPDRKAKPLRDCPQHLILDDVKQRKVLDLRRWYCISRPQYKTSCGISSLVSCWNFLYSTLGAGSLPPITQEEALHILGFQPPFEEIRFGPFTGNTTLMRWFRQINDHFHVKGCSYVLYKPHGKNKTAGETAVGALSKLTQGLKEDSTAYVYHCQNHYFCPIGFEATPVKASKAYRGQLFPHEVEYWILIGEPSRKHPTIHCKKWADIVTDLNTQNPEYFDIRHTERGLQYRKTKKGGNLHCLLAFQRLSWQRFGPWPLQLGTLRPEPQPPVQGRRIPKSESEDNVSKKQHGRLGRSFSAGFQQELAWKRMCNIRERRGSGSPESDTDYEGND</sequence>
<proteinExistence type="evidence at transcript level"/>
<organism>
    <name type="scientific">Xenopus laevis</name>
    <name type="common">African clawed frog</name>
    <dbReference type="NCBI Taxonomy" id="8355"/>
    <lineage>
        <taxon>Eukaryota</taxon>
        <taxon>Metazoa</taxon>
        <taxon>Chordata</taxon>
        <taxon>Craniata</taxon>
        <taxon>Vertebrata</taxon>
        <taxon>Euteleostomi</taxon>
        <taxon>Amphibia</taxon>
        <taxon>Batrachia</taxon>
        <taxon>Anura</taxon>
        <taxon>Pipoidea</taxon>
        <taxon>Pipidae</taxon>
        <taxon>Xenopodinae</taxon>
        <taxon>Xenopus</taxon>
        <taxon>Xenopus</taxon>
    </lineage>
</organism>
<keyword id="KW-0963">Cytoplasm</keyword>
<keyword id="KW-0539">Nucleus</keyword>
<keyword id="KW-1185">Reference proteome</keyword>
<protein>
    <recommendedName>
        <fullName>Basic immunoglobulin-like variable motif-containing protein</fullName>
    </recommendedName>
</protein>
<evidence type="ECO:0000250" key="1"/>
<evidence type="ECO:0000256" key="2">
    <source>
        <dbReference type="SAM" id="MobiDB-lite"/>
    </source>
</evidence>
<evidence type="ECO:0000305" key="3"/>
<reference key="1">
    <citation type="submission" date="2005-10" db="EMBL/GenBank/DDBJ databases">
        <authorList>
            <consortium name="NIH - Xenopus Gene Collection (XGC) project"/>
        </authorList>
    </citation>
    <scope>NUCLEOTIDE SEQUENCE [LARGE SCALE MRNA]</scope>
    <source>
        <tissue>Testis</tissue>
    </source>
</reference>
<dbReference type="EMBL" id="BC106596">
    <property type="status" value="NOT_ANNOTATED_CDS"/>
    <property type="molecule type" value="mRNA"/>
</dbReference>
<dbReference type="IntAct" id="Q3KPR5">
    <property type="interactions" value="1"/>
</dbReference>
<dbReference type="Proteomes" id="UP000186698">
    <property type="component" value="Unplaced"/>
</dbReference>
<dbReference type="GO" id="GO:0005737">
    <property type="term" value="C:cytoplasm"/>
    <property type="evidence" value="ECO:0007669"/>
    <property type="project" value="UniProtKB-SubCell"/>
</dbReference>
<dbReference type="GO" id="GO:0005634">
    <property type="term" value="C:nucleus"/>
    <property type="evidence" value="ECO:0000318"/>
    <property type="project" value="GO_Central"/>
</dbReference>
<dbReference type="GO" id="GO:0004520">
    <property type="term" value="F:DNA endonuclease activity"/>
    <property type="evidence" value="ECO:0000318"/>
    <property type="project" value="GO_Central"/>
</dbReference>
<dbReference type="GO" id="GO:0003697">
    <property type="term" value="F:single-stranded DNA binding"/>
    <property type="evidence" value="ECO:0000318"/>
    <property type="project" value="GO_Central"/>
</dbReference>
<dbReference type="PANTHER" id="PTHR16171:SF13">
    <property type="entry name" value="BASIC IMMUNOGLOBULIN-LIKE VARIABLE MOTIF-CONTAINING PROTEIN"/>
    <property type="match status" value="1"/>
</dbReference>
<dbReference type="PANTHER" id="PTHR16171">
    <property type="entry name" value="DNA REPAIR PROTEIN COMPLEMENTING XP-G CELLS-RELATED"/>
    <property type="match status" value="1"/>
</dbReference>
<gene>
    <name type="primary">bivm</name>
</gene>
<comment type="subcellular location">
    <subcellularLocation>
        <location evidence="1">Cytoplasm</location>
    </subcellularLocation>
    <subcellularLocation>
        <location evidence="1">Nucleus</location>
    </subcellularLocation>
</comment>
<comment type="similarity">
    <text evidence="3">Belongs to the BIVM family.</text>
</comment>
<comment type="sequence caution" evidence="3">
    <conflict type="erroneous termination">
        <sequence resource="EMBL" id="BC106596"/>
    </conflict>
    <text>Truncated C-terminus.</text>
</comment>
<comment type="sequence caution" evidence="3">
    <conflict type="frameshift">
        <sequence resource="EMBL" id="BC106596"/>
    </conflict>
</comment>
<feature type="chain" id="PRO_0000328957" description="Basic immunoglobulin-like variable motif-containing protein">
    <location>
        <begin position="1"/>
        <end position="497"/>
    </location>
</feature>
<feature type="region of interest" description="Disordered" evidence="2">
    <location>
        <begin position="1"/>
        <end position="24"/>
    </location>
</feature>
<feature type="region of interest" description="Disordered" evidence="2">
    <location>
        <begin position="150"/>
        <end position="173"/>
    </location>
</feature>
<feature type="region of interest" description="Disordered" evidence="2">
    <location>
        <begin position="426"/>
        <end position="462"/>
    </location>
</feature>
<feature type="region of interest" description="Disordered" evidence="2">
    <location>
        <begin position="478"/>
        <end position="497"/>
    </location>
</feature>
<feature type="compositionally biased region" description="Basic residues" evidence="2">
    <location>
        <begin position="152"/>
        <end position="169"/>
    </location>
</feature>
<feature type="compositionally biased region" description="Basic and acidic residues" evidence="2">
    <location>
        <begin position="442"/>
        <end position="451"/>
    </location>
</feature>
<name>BIVM_XENLA</name>